<feature type="chain" id="PRO_0000322604" description="Snake venom metalloproteinase atroxase">
    <location>
        <begin position="1"/>
        <end position="203"/>
    </location>
</feature>
<feature type="domain" description="Peptidase M12B" evidence="3">
    <location>
        <begin position="9"/>
        <end position="203"/>
    </location>
</feature>
<feature type="active site" evidence="3 4">
    <location>
        <position position="146"/>
    </location>
</feature>
<feature type="binding site" evidence="1">
    <location>
        <position position="12"/>
    </location>
    <ligand>
        <name>Ca(2+)</name>
        <dbReference type="ChEBI" id="CHEBI:29108"/>
    </ligand>
</feature>
<feature type="binding site" evidence="1">
    <location>
        <position position="96"/>
    </location>
    <ligand>
        <name>Ca(2+)</name>
        <dbReference type="ChEBI" id="CHEBI:29108"/>
    </ligand>
</feature>
<feature type="binding site" evidence="1">
    <location>
        <position position="145"/>
    </location>
    <ligand>
        <name>Zn(2+)</name>
        <dbReference type="ChEBI" id="CHEBI:29105"/>
        <note>catalytic</note>
    </ligand>
</feature>
<feature type="binding site" evidence="1">
    <location>
        <position position="149"/>
    </location>
    <ligand>
        <name>Zn(2+)</name>
        <dbReference type="ChEBI" id="CHEBI:29105"/>
        <note>catalytic</note>
    </ligand>
</feature>
<feature type="binding site" evidence="1">
    <location>
        <position position="155"/>
    </location>
    <ligand>
        <name>Zn(2+)</name>
        <dbReference type="ChEBI" id="CHEBI:29105"/>
        <note>catalytic</note>
    </ligand>
</feature>
<feature type="binding site" evidence="1">
    <location>
        <position position="202"/>
    </location>
    <ligand>
        <name>Ca(2+)</name>
        <dbReference type="ChEBI" id="CHEBI:29108"/>
    </ligand>
</feature>
<feature type="modified residue" description="Pyrrolidone carboxylic acid (Glu)" evidence="1">
    <location>
        <position position="1"/>
    </location>
</feature>
<feature type="glycosylation site" description="N-linked (GlcNAc...) asparagine" evidence="2">
    <location>
        <position position="5"/>
    </location>
</feature>
<feature type="disulfide bond" evidence="3">
    <location>
        <begin position="160"/>
        <end position="167"/>
    </location>
</feature>
<feature type="sequence conflict" description="In Ref. 1; AA sequence." evidence="8" ref="1">
    <original>Q</original>
    <variation>D</variation>
    <location>
        <position position="3"/>
    </location>
</feature>
<feature type="sequence conflict" description="In Ref. 1; AA sequence." evidence="8" ref="1">
    <original>SQR</original>
    <variation>PPQK</variation>
    <location>
        <begin position="7"/>
        <end position="9"/>
    </location>
</feature>
<feature type="sequence conflict" description="In Ref. 1; AA sequence." evidence="8" ref="1">
    <original>V</original>
    <variation>L</variation>
    <location>
        <position position="21"/>
    </location>
</feature>
<feature type="sequence conflict" description="In Ref. 1; AA sequence." evidence="8" ref="1">
    <location>
        <position position="26"/>
    </location>
</feature>
<feature type="sequence conflict" description="In Ref. 1; AA sequence." evidence="8" ref="1">
    <original>G</original>
    <variation>H</variation>
    <location>
        <position position="187"/>
    </location>
</feature>
<feature type="sequence conflict" description="In Ref. 1; AA sequence." evidence="8" ref="1">
    <original>QS</original>
    <variation>ER</variation>
    <location>
        <begin position="190"/>
        <end position="191"/>
    </location>
</feature>
<feature type="sequence conflict" description="In Ref. 1; AA sequence." evidence="8" ref="1">
    <original>Q</original>
    <variation>C</variation>
    <location>
        <position position="199"/>
    </location>
</feature>
<proteinExistence type="evidence at protein level"/>
<comment type="function">
    <text evidence="5 6">Snake venom zinc metalloprotease that has Aalpha, Bbeta fibrin(ogen)olytic activities. It cleaves the Aalpha chain of fibrinogen first followed by the Bbeta chain and shows no effect on the gamma chain. Does not induce or inhibit platelet aggregation, and is unable to activate plasminogen. Exhibits low lethality when tested on mice. Intravenous administration results in thrombolysis within one hour followed by recanalization. Fibrinogenolytic activity results in a 60% decrease in the rat's plasma fibrinogen level. Histological examination of kidney, liver, heart and lung tissue shows no necrosis nor hemorrhage.</text>
</comment>
<comment type="catalytic activity">
    <reaction>
        <text>Cleavage of 5-His-|-Leu-6, 9-Ser-|-His-10, 10-His-|-Leu-11, 14-Ala-|-Leu-15 and 16-Tyr-|-Leu-17 in insulin B chain.</text>
        <dbReference type="EC" id="3.4.24.43"/>
    </reaction>
</comment>
<comment type="cofactor">
    <cofactor evidence="1">
        <name>Zn(2+)</name>
        <dbReference type="ChEBI" id="CHEBI:29105"/>
    </cofactor>
    <text evidence="1">Binds 1 zinc ion per subunit.</text>
</comment>
<comment type="activity regulation">
    <text evidence="6">Inhibited by EDTA and alpha2-macroglobulin.</text>
</comment>
<comment type="biophysicochemical properties">
    <phDependence>
        <text evidence="6">Optimum pH is 9.0.</text>
    </phDependence>
    <temperatureDependence>
        <text evidence="6">Optimum temperature is 55 degrees Celsius.</text>
    </temperatureDependence>
</comment>
<comment type="subunit">
    <text evidence="6">Monomer.</text>
</comment>
<comment type="subcellular location">
    <subcellularLocation>
        <location evidence="7">Secreted</location>
    </subcellularLocation>
</comment>
<comment type="tissue specificity">
    <text evidence="8">Expressed by the venom gland.</text>
</comment>
<comment type="PTM">
    <text evidence="7">The N-terminus is blocked.</text>
</comment>
<comment type="similarity">
    <text evidence="8">Belongs to the venom metalloproteinase (M12B) family. P-I subfamily.</text>
</comment>
<accession>Q91401</accession>
<dbReference type="EC" id="3.4.24.43"/>
<dbReference type="EMBL" id="S77086">
    <property type="protein sequence ID" value="AAB33788.2"/>
    <property type="molecule type" value="mRNA"/>
</dbReference>
<dbReference type="PIR" id="I51280">
    <property type="entry name" value="I51280"/>
</dbReference>
<dbReference type="MEROPS" id="M12.147"/>
<dbReference type="KEGG" id="ag:AAB33788"/>
<dbReference type="GO" id="GO:0005576">
    <property type="term" value="C:extracellular region"/>
    <property type="evidence" value="ECO:0007669"/>
    <property type="project" value="UniProtKB-SubCell"/>
</dbReference>
<dbReference type="GO" id="GO:0005886">
    <property type="term" value="C:plasma membrane"/>
    <property type="evidence" value="ECO:0007669"/>
    <property type="project" value="TreeGrafter"/>
</dbReference>
<dbReference type="GO" id="GO:0046872">
    <property type="term" value="F:metal ion binding"/>
    <property type="evidence" value="ECO:0007669"/>
    <property type="project" value="UniProtKB-KW"/>
</dbReference>
<dbReference type="GO" id="GO:0004222">
    <property type="term" value="F:metalloendopeptidase activity"/>
    <property type="evidence" value="ECO:0007669"/>
    <property type="project" value="InterPro"/>
</dbReference>
<dbReference type="GO" id="GO:0090729">
    <property type="term" value="F:toxin activity"/>
    <property type="evidence" value="ECO:0007669"/>
    <property type="project" value="UniProtKB-KW"/>
</dbReference>
<dbReference type="GO" id="GO:0006508">
    <property type="term" value="P:proteolysis"/>
    <property type="evidence" value="ECO:0007669"/>
    <property type="project" value="UniProtKB-KW"/>
</dbReference>
<dbReference type="CDD" id="cd04269">
    <property type="entry name" value="ZnMc_adamalysin_II_like"/>
    <property type="match status" value="1"/>
</dbReference>
<dbReference type="FunFam" id="3.40.390.10:FF:000002">
    <property type="entry name" value="Disintegrin and metalloproteinase domain-containing protein 22"/>
    <property type="match status" value="1"/>
</dbReference>
<dbReference type="Gene3D" id="3.40.390.10">
    <property type="entry name" value="Collagenase (Catalytic Domain)"/>
    <property type="match status" value="1"/>
</dbReference>
<dbReference type="InterPro" id="IPR024079">
    <property type="entry name" value="MetalloPept_cat_dom_sf"/>
</dbReference>
<dbReference type="InterPro" id="IPR001590">
    <property type="entry name" value="Peptidase_M12B"/>
</dbReference>
<dbReference type="InterPro" id="IPR034027">
    <property type="entry name" value="Reprolysin_adamalysin"/>
</dbReference>
<dbReference type="PANTHER" id="PTHR11905">
    <property type="entry name" value="ADAM A DISINTEGRIN AND METALLOPROTEASE DOMAIN"/>
    <property type="match status" value="1"/>
</dbReference>
<dbReference type="PANTHER" id="PTHR11905:SF32">
    <property type="entry name" value="DISINTEGRIN AND METALLOPROTEINASE DOMAIN-CONTAINING PROTEIN 28"/>
    <property type="match status" value="1"/>
</dbReference>
<dbReference type="Pfam" id="PF01421">
    <property type="entry name" value="Reprolysin"/>
    <property type="match status" value="1"/>
</dbReference>
<dbReference type="SUPFAM" id="SSF55486">
    <property type="entry name" value="Metalloproteases ('zincins'), catalytic domain"/>
    <property type="match status" value="1"/>
</dbReference>
<dbReference type="PROSITE" id="PS50215">
    <property type="entry name" value="ADAM_MEPRO"/>
    <property type="match status" value="1"/>
</dbReference>
<dbReference type="PROSITE" id="PS00142">
    <property type="entry name" value="ZINC_PROTEASE"/>
    <property type="match status" value="1"/>
</dbReference>
<keyword id="KW-0106">Calcium</keyword>
<keyword id="KW-0903">Direct protein sequencing</keyword>
<keyword id="KW-1015">Disulfide bond</keyword>
<keyword id="KW-1206">Fibrinogenolytic toxin</keyword>
<keyword id="KW-1205">Fibrinolytic toxin</keyword>
<keyword id="KW-0325">Glycoprotein</keyword>
<keyword id="KW-1199">Hemostasis impairing toxin</keyword>
<keyword id="KW-0378">Hydrolase</keyword>
<keyword id="KW-0479">Metal-binding</keyword>
<keyword id="KW-0482">Metalloprotease</keyword>
<keyword id="KW-0630">Potassium</keyword>
<keyword id="KW-0645">Protease</keyword>
<keyword id="KW-0873">Pyrrolidone carboxylic acid</keyword>
<keyword id="KW-0964">Secreted</keyword>
<keyword id="KW-0800">Toxin</keyword>
<keyword id="KW-0862">Zinc</keyword>
<sequence length="203" mass="23204">EDQQNLSQRYIELVVVADHRVFMKYNSDLNIIRKRVHELVNTINGFYRSLNIDVSLTDLEIWSDQDFITVDSSAKNTLNSFGEWREADLLRRKSHDHAQLLTAINFEGKIIGRAYTSSMCNPRKSVGIXKDHSPINLLVGVTMAHELGHNLGMNHDGEKCLRGASLCIMRPGLTPGRSYEFSDDSMGYYQSFLKQYNPQIXNK</sequence>
<reference key="1">
    <citation type="journal article" date="1995" name="Arch. Biochem. Biophys.">
        <title>Nucleotide sequence encoding the snake venom fibrinolytic enzyme atroxase obtained from a Crotalus atrox venom gland cDNA library.</title>
        <authorList>
            <person name="Baker B.J."/>
            <person name="Wongvibulsin S."/>
            <person name="Nyborg J."/>
            <person name="Tu A.T."/>
        </authorList>
    </citation>
    <scope>NUCLEOTIDE SEQUENCE [MRNA] OF 1-199</scope>
    <scope>PROTEIN SEQUENCE OF 1-28; 64-70 AND 186-203</scope>
    <scope>SUBCELLULAR LOCATION</scope>
    <source>
        <tissue>Venom</tissue>
        <tissue>Venom gland</tissue>
    </source>
</reference>
<reference key="2">
    <citation type="journal article" date="2009" name="J. Proteome Res.">
        <title>Exploring the venom proteome of the western diamondback rattlesnake, Crotalus atrox, via snake venomics and combinatorial peptide ligand library approaches.</title>
        <authorList>
            <person name="Calvete J.J."/>
            <person name="Fasoli E."/>
            <person name="Sanz L."/>
            <person name="Boschetti E."/>
            <person name="Righetti P.G."/>
        </authorList>
    </citation>
    <scope>PROTEIN SEQUENCE OF 10-20; 25-33; 36-48; 76-85; 94-109; 114-123 AND 163-177</scope>
    <scope>IDENTIFICATION BY MASS SPECTROMETRY</scope>
    <source>
        <tissue>Venom</tissue>
    </source>
</reference>
<reference key="3">
    <citation type="journal article" date="1988" name="Biochemistry">
        <title>Purification and biochemical characterization of atroxase, a nonhemorrhagic fibrinolytic protease from western diamondback rattlesnake venom.</title>
        <authorList>
            <person name="Willis T.W."/>
            <person name="Tu A.T."/>
        </authorList>
    </citation>
    <scope>FUNCTION</scope>
    <scope>ACTIVITY REGULATION</scope>
    <scope>BIOPHYSICOCHEMICAL PROPERTIES</scope>
    <scope>SUBUNIT</scope>
</reference>
<reference key="4">
    <citation type="journal article" date="1989" name="Thromb. Res.">
        <title>Thrombolysis with a snake venom protease in a rat model of venous thrombosis.</title>
        <authorList>
            <person name="Willis T.W."/>
            <person name="Tu A.T."/>
            <person name="Miller C.W."/>
        </authorList>
    </citation>
    <scope>FUNCTION</scope>
</reference>
<evidence type="ECO:0000250" key="1"/>
<evidence type="ECO:0000255" key="2"/>
<evidence type="ECO:0000255" key="3">
    <source>
        <dbReference type="PROSITE-ProRule" id="PRU00276"/>
    </source>
</evidence>
<evidence type="ECO:0000255" key="4">
    <source>
        <dbReference type="PROSITE-ProRule" id="PRU10095"/>
    </source>
</evidence>
<evidence type="ECO:0000269" key="5">
    <source>
    </source>
</evidence>
<evidence type="ECO:0000269" key="6">
    <source>
    </source>
</evidence>
<evidence type="ECO:0000269" key="7">
    <source>
    </source>
</evidence>
<evidence type="ECO:0000305" key="8"/>
<name>VM1AT_CROAT</name>
<organism>
    <name type="scientific">Crotalus atrox</name>
    <name type="common">Western diamondback rattlesnake</name>
    <dbReference type="NCBI Taxonomy" id="8730"/>
    <lineage>
        <taxon>Eukaryota</taxon>
        <taxon>Metazoa</taxon>
        <taxon>Chordata</taxon>
        <taxon>Craniata</taxon>
        <taxon>Vertebrata</taxon>
        <taxon>Euteleostomi</taxon>
        <taxon>Lepidosauria</taxon>
        <taxon>Squamata</taxon>
        <taxon>Bifurcata</taxon>
        <taxon>Unidentata</taxon>
        <taxon>Episquamata</taxon>
        <taxon>Toxicofera</taxon>
        <taxon>Serpentes</taxon>
        <taxon>Colubroidea</taxon>
        <taxon>Viperidae</taxon>
        <taxon>Crotalinae</taxon>
        <taxon>Crotalus</taxon>
    </lineage>
</organism>
<protein>
    <recommendedName>
        <fullName>Snake venom metalloproteinase atroxase</fullName>
        <shortName>SVMP</shortName>
        <ecNumber>3.4.24.43</ecNumber>
    </recommendedName>
    <alternativeName>
        <fullName>Nonhemorrhagic metalloprotease atroxase</fullName>
    </alternativeName>
</protein>